<gene>
    <name evidence="1" type="primary">psbI</name>
    <name type="ordered locus">P9301_02771</name>
</gene>
<dbReference type="EMBL" id="CP000576">
    <property type="protein sequence ID" value="ABO16900.1"/>
    <property type="molecule type" value="Genomic_DNA"/>
</dbReference>
<dbReference type="RefSeq" id="WP_002805124.1">
    <property type="nucleotide sequence ID" value="NC_009091.1"/>
</dbReference>
<dbReference type="SMR" id="A3PAX5"/>
<dbReference type="STRING" id="167546.P9301_02771"/>
<dbReference type="KEGG" id="pmg:P9301_02771"/>
<dbReference type="HOGENOM" id="CLU_212150_0_0_3"/>
<dbReference type="Proteomes" id="UP000001430">
    <property type="component" value="Chromosome"/>
</dbReference>
<dbReference type="GO" id="GO:0009539">
    <property type="term" value="C:photosystem II reaction center"/>
    <property type="evidence" value="ECO:0007669"/>
    <property type="project" value="InterPro"/>
</dbReference>
<dbReference type="GO" id="GO:0031676">
    <property type="term" value="C:plasma membrane-derived thylakoid membrane"/>
    <property type="evidence" value="ECO:0007669"/>
    <property type="project" value="UniProtKB-SubCell"/>
</dbReference>
<dbReference type="GO" id="GO:0015979">
    <property type="term" value="P:photosynthesis"/>
    <property type="evidence" value="ECO:0007669"/>
    <property type="project" value="UniProtKB-UniRule"/>
</dbReference>
<dbReference type="HAMAP" id="MF_01316">
    <property type="entry name" value="PSII_PsbI"/>
    <property type="match status" value="1"/>
</dbReference>
<dbReference type="InterPro" id="IPR003686">
    <property type="entry name" value="PSII_PsbI"/>
</dbReference>
<dbReference type="InterPro" id="IPR037271">
    <property type="entry name" value="PSII_PsbI_sf"/>
</dbReference>
<dbReference type="NCBIfam" id="NF002735">
    <property type="entry name" value="PRK02655.1"/>
    <property type="match status" value="1"/>
</dbReference>
<dbReference type="PANTHER" id="PTHR35772">
    <property type="entry name" value="PHOTOSYSTEM II REACTION CENTER PROTEIN I"/>
    <property type="match status" value="1"/>
</dbReference>
<dbReference type="PANTHER" id="PTHR35772:SF1">
    <property type="entry name" value="PHOTOSYSTEM II REACTION CENTER PROTEIN I"/>
    <property type="match status" value="1"/>
</dbReference>
<dbReference type="Pfam" id="PF02532">
    <property type="entry name" value="PsbI"/>
    <property type="match status" value="1"/>
</dbReference>
<dbReference type="SUPFAM" id="SSF161041">
    <property type="entry name" value="Photosystem II reaction center protein I, PsbI"/>
    <property type="match status" value="1"/>
</dbReference>
<comment type="function">
    <text evidence="1">One of the components of the core complex of photosystem II (PSII), required for its stability and/or assembly. PSII is a light-driven water:plastoquinone oxidoreductase that uses light energy to abstract electrons from H(2)O, generating O(2) and a proton gradient subsequently used for ATP formation. It consists of a core antenna complex that captures photons, and an electron transfer chain that converts photonic excitation into a charge separation.</text>
</comment>
<comment type="subunit">
    <text evidence="2">PSII is composed of 1 copy each of membrane proteins PsbA, PsbB, PsbC, PsbD, PsbE, PsbF, PsbH, PsbI, PsbJ, PsbK, PsbL, PsbM, PsbT, PsbX, PsbY, Psb30/Ycf12, peripheral proteins PsbO, CyanoQ (PsbQ), PsbU, PsbV and a large number of cofactors. It forms dimeric complexes.</text>
</comment>
<comment type="subcellular location">
    <subcellularLocation>
        <location evidence="1">Cellular thylakoid membrane</location>
        <topology evidence="1">Single-pass membrane protein</topology>
    </subcellularLocation>
</comment>
<comment type="similarity">
    <text evidence="1">Belongs to the PsbI family.</text>
</comment>
<proteinExistence type="inferred from homology"/>
<name>PSBI_PROM0</name>
<protein>
    <recommendedName>
        <fullName evidence="1">Photosystem II reaction center protein I</fullName>
        <shortName evidence="1">PSII-I</shortName>
    </recommendedName>
    <alternativeName>
        <fullName evidence="1">PSII 4.4 kDa protein</fullName>
    </alternativeName>
</protein>
<reference key="1">
    <citation type="journal article" date="2007" name="PLoS Genet.">
        <title>Patterns and implications of gene gain and loss in the evolution of Prochlorococcus.</title>
        <authorList>
            <person name="Kettler G.C."/>
            <person name="Martiny A.C."/>
            <person name="Huang K."/>
            <person name="Zucker J."/>
            <person name="Coleman M.L."/>
            <person name="Rodrigue S."/>
            <person name="Chen F."/>
            <person name="Lapidus A."/>
            <person name="Ferriera S."/>
            <person name="Johnson J."/>
            <person name="Steglich C."/>
            <person name="Church G.M."/>
            <person name="Richardson P."/>
            <person name="Chisholm S.W."/>
        </authorList>
    </citation>
    <scope>NUCLEOTIDE SEQUENCE [LARGE SCALE GENOMIC DNA]</scope>
    <source>
        <strain>MIT 9301</strain>
    </source>
</reference>
<sequence length="42" mass="4796">MLALKISVYTIVFFFVGIFLFGFLASDPTRTPNRKDLESPQD</sequence>
<accession>A3PAX5</accession>
<keyword id="KW-0472">Membrane</keyword>
<keyword id="KW-0602">Photosynthesis</keyword>
<keyword id="KW-0604">Photosystem II</keyword>
<keyword id="KW-0674">Reaction center</keyword>
<keyword id="KW-1185">Reference proteome</keyword>
<keyword id="KW-0793">Thylakoid</keyword>
<keyword id="KW-0812">Transmembrane</keyword>
<keyword id="KW-1133">Transmembrane helix</keyword>
<feature type="chain" id="PRO_0000298295" description="Photosystem II reaction center protein I">
    <location>
        <begin position="1"/>
        <end position="42"/>
    </location>
</feature>
<feature type="transmembrane region" description="Helical" evidence="1">
    <location>
        <begin position="6"/>
        <end position="26"/>
    </location>
</feature>
<evidence type="ECO:0000255" key="1">
    <source>
        <dbReference type="HAMAP-Rule" id="MF_01316"/>
    </source>
</evidence>
<evidence type="ECO:0000305" key="2"/>
<organism>
    <name type="scientific">Prochlorococcus marinus (strain MIT 9301)</name>
    <dbReference type="NCBI Taxonomy" id="167546"/>
    <lineage>
        <taxon>Bacteria</taxon>
        <taxon>Bacillati</taxon>
        <taxon>Cyanobacteriota</taxon>
        <taxon>Cyanophyceae</taxon>
        <taxon>Synechococcales</taxon>
        <taxon>Prochlorococcaceae</taxon>
        <taxon>Prochlorococcus</taxon>
    </lineage>
</organism>